<keyword id="KW-0050">Antiport</keyword>
<keyword id="KW-0997">Cell inner membrane</keyword>
<keyword id="KW-1003">Cell membrane</keyword>
<keyword id="KW-0406">Ion transport</keyword>
<keyword id="KW-0472">Membrane</keyword>
<keyword id="KW-1185">Reference proteome</keyword>
<keyword id="KW-0915">Sodium</keyword>
<keyword id="KW-0739">Sodium transport</keyword>
<keyword id="KW-0812">Transmembrane</keyword>
<keyword id="KW-1133">Transmembrane helix</keyword>
<keyword id="KW-0813">Transport</keyword>
<dbReference type="EMBL" id="AE004439">
    <property type="protein sequence ID" value="AAK02131.1"/>
    <property type="molecule type" value="Genomic_DNA"/>
</dbReference>
<dbReference type="RefSeq" id="WP_010906451.1">
    <property type="nucleotide sequence ID" value="NC_002663.1"/>
</dbReference>
<dbReference type="SMR" id="Q9CPJ1"/>
<dbReference type="STRING" id="272843.PM0047"/>
<dbReference type="EnsemblBacteria" id="AAK02131">
    <property type="protein sequence ID" value="AAK02131"/>
    <property type="gene ID" value="PM0047"/>
</dbReference>
<dbReference type="KEGG" id="pmu:PM0047"/>
<dbReference type="PATRIC" id="fig|272843.6.peg.48"/>
<dbReference type="HOGENOM" id="CLU_041110_0_0_6"/>
<dbReference type="OrthoDB" id="5288732at2"/>
<dbReference type="Proteomes" id="UP000000809">
    <property type="component" value="Chromosome"/>
</dbReference>
<dbReference type="GO" id="GO:0005886">
    <property type="term" value="C:plasma membrane"/>
    <property type="evidence" value="ECO:0007669"/>
    <property type="project" value="UniProtKB-SubCell"/>
</dbReference>
<dbReference type="GO" id="GO:0015385">
    <property type="term" value="F:sodium:proton antiporter activity"/>
    <property type="evidence" value="ECO:0007669"/>
    <property type="project" value="InterPro"/>
</dbReference>
<dbReference type="HAMAP" id="MF_01599">
    <property type="entry name" value="NhaB"/>
    <property type="match status" value="1"/>
</dbReference>
<dbReference type="InterPro" id="IPR004671">
    <property type="entry name" value="Na+/H+_antiporter_NhaB"/>
</dbReference>
<dbReference type="NCBIfam" id="TIGR00774">
    <property type="entry name" value="NhaB"/>
    <property type="match status" value="1"/>
</dbReference>
<dbReference type="NCBIfam" id="NF007093">
    <property type="entry name" value="PRK09547.1"/>
    <property type="match status" value="1"/>
</dbReference>
<dbReference type="PANTHER" id="PTHR43302:SF1">
    <property type="entry name" value="NA(+)_H(+) ANTIPORTER NHAB"/>
    <property type="match status" value="1"/>
</dbReference>
<dbReference type="PANTHER" id="PTHR43302">
    <property type="entry name" value="TRANSPORTER ARSB-RELATED"/>
    <property type="match status" value="1"/>
</dbReference>
<dbReference type="Pfam" id="PF06450">
    <property type="entry name" value="NhaB"/>
    <property type="match status" value="1"/>
</dbReference>
<accession>Q9CPJ1</accession>
<sequence>MSYTQAFLRNFLGTSPNWYKITIVLFLIINPIIFFFISPFIAGWLLVAEFILTLAMALKCYPLQPGGLLALEAVAIGMTHPEHVKAEIIANFEVILLLIFMVAGIYFMKRLLLFVFTKLLLSIRSKMVLSLAFCLSAAFLSAFLDALTVVAVIISVGMGFYGVYHKVASGNNFNDSTDITKDDKIGENKDTLEQFRAFLRSLMMHSCVGTALGGVMTMVGEPQNLIIAEQAKWAFGEFFLRMLPVTLPVLICGLVTCFLVEKFGVFGYGAKLPRKVWGILAKFDRNNQQKMSQQDRLKLFVQALIGIWLVVGLAFHLAAVGIIGLTVIILATSFCGVTSEHAIGKAFQESLPFTALLVVFFSVVAVIIDQHLFAPIIQFVLAASEHTQLALFYIFNGLLSAISDNVFVATVYINETKAALEAGLIAQPQYELLAVAINTGTNLPSVATPNGQAAFLFLLTSSLAPLIRLSYGRMVYMALPYTIVLSCIGLLAVEYILPGATNVLIQIGLLKPM</sequence>
<comment type="function">
    <text evidence="1">Na(+)/H(+) antiporter that extrudes sodium in exchange for external protons.</text>
</comment>
<comment type="catalytic activity">
    <reaction evidence="1">
        <text>2 Na(+)(in) + 3 H(+)(out) = 2 Na(+)(out) + 3 H(+)(in)</text>
        <dbReference type="Rhea" id="RHEA:29247"/>
        <dbReference type="ChEBI" id="CHEBI:15378"/>
        <dbReference type="ChEBI" id="CHEBI:29101"/>
    </reaction>
    <physiologicalReaction direction="left-to-right" evidence="1">
        <dbReference type="Rhea" id="RHEA:29248"/>
    </physiologicalReaction>
</comment>
<comment type="subcellular location">
    <subcellularLocation>
        <location evidence="1">Cell inner membrane</location>
        <topology evidence="1">Multi-pass membrane protein</topology>
    </subcellularLocation>
</comment>
<comment type="similarity">
    <text evidence="1">Belongs to the NhaB Na(+)/H(+) (TC 2.A.34) antiporter family.</text>
</comment>
<protein>
    <recommendedName>
        <fullName evidence="1">Na(+)/H(+) antiporter NhaB</fullName>
    </recommendedName>
    <alternativeName>
        <fullName evidence="1">Sodium/proton antiporter NhaB</fullName>
    </alternativeName>
</protein>
<feature type="chain" id="PRO_0000333102" description="Na(+)/H(+) antiporter NhaB">
    <location>
        <begin position="1"/>
        <end position="513"/>
    </location>
</feature>
<feature type="transmembrane region" description="Helical" evidence="1">
    <location>
        <begin position="21"/>
        <end position="41"/>
    </location>
</feature>
<feature type="transmembrane region" description="Helical" evidence="1">
    <location>
        <begin position="88"/>
        <end position="108"/>
    </location>
</feature>
<feature type="transmembrane region" description="Helical" evidence="1">
    <location>
        <begin position="119"/>
        <end position="139"/>
    </location>
</feature>
<feature type="transmembrane region" description="Helical" evidence="1">
    <location>
        <begin position="143"/>
        <end position="163"/>
    </location>
</feature>
<feature type="transmembrane region" description="Helical" evidence="1">
    <location>
        <begin position="208"/>
        <end position="228"/>
    </location>
</feature>
<feature type="transmembrane region" description="Helical" evidence="1">
    <location>
        <begin position="247"/>
        <end position="267"/>
    </location>
</feature>
<feature type="transmembrane region" description="Helical" evidence="1">
    <location>
        <begin position="303"/>
        <end position="323"/>
    </location>
</feature>
<feature type="transmembrane region" description="Helical" evidence="1">
    <location>
        <begin position="357"/>
        <end position="377"/>
    </location>
</feature>
<feature type="transmembrane region" description="Helical" evidence="1">
    <location>
        <begin position="389"/>
        <end position="409"/>
    </location>
</feature>
<feature type="transmembrane region" description="Helical" evidence="1">
    <location>
        <begin position="447"/>
        <end position="467"/>
    </location>
</feature>
<feature type="transmembrane region" description="Helical" evidence="1">
    <location>
        <begin position="477"/>
        <end position="497"/>
    </location>
</feature>
<proteinExistence type="inferred from homology"/>
<gene>
    <name evidence="1" type="primary">nhaB</name>
    <name type="ordered locus">PM0047</name>
</gene>
<name>NHAB_PASMU</name>
<evidence type="ECO:0000255" key="1">
    <source>
        <dbReference type="HAMAP-Rule" id="MF_01599"/>
    </source>
</evidence>
<organism>
    <name type="scientific">Pasteurella multocida (strain Pm70)</name>
    <dbReference type="NCBI Taxonomy" id="272843"/>
    <lineage>
        <taxon>Bacteria</taxon>
        <taxon>Pseudomonadati</taxon>
        <taxon>Pseudomonadota</taxon>
        <taxon>Gammaproteobacteria</taxon>
        <taxon>Pasteurellales</taxon>
        <taxon>Pasteurellaceae</taxon>
        <taxon>Pasteurella</taxon>
    </lineage>
</organism>
<reference key="1">
    <citation type="journal article" date="2001" name="Proc. Natl. Acad. Sci. U.S.A.">
        <title>Complete genomic sequence of Pasteurella multocida Pm70.</title>
        <authorList>
            <person name="May B.J."/>
            <person name="Zhang Q."/>
            <person name="Li L.L."/>
            <person name="Paustian M.L."/>
            <person name="Whittam T.S."/>
            <person name="Kapur V."/>
        </authorList>
    </citation>
    <scope>NUCLEOTIDE SEQUENCE [LARGE SCALE GENOMIC DNA]</scope>
    <source>
        <strain>Pm70</strain>
    </source>
</reference>